<reference key="1">
    <citation type="journal article" date="2005" name="Proc. Natl. Acad. Sci. U.S.A.">
        <title>The psychrophilic lifestyle as revealed by the genome sequence of Colwellia psychrerythraea 34H through genomic and proteomic analyses.</title>
        <authorList>
            <person name="Methe B.A."/>
            <person name="Nelson K.E."/>
            <person name="Deming J.W."/>
            <person name="Momen B."/>
            <person name="Melamud E."/>
            <person name="Zhang X."/>
            <person name="Moult J."/>
            <person name="Madupu R."/>
            <person name="Nelson W.C."/>
            <person name="Dodson R.J."/>
            <person name="Brinkac L.M."/>
            <person name="Daugherty S.C."/>
            <person name="Durkin A.S."/>
            <person name="DeBoy R.T."/>
            <person name="Kolonay J.F."/>
            <person name="Sullivan S.A."/>
            <person name="Zhou L."/>
            <person name="Davidsen T.M."/>
            <person name="Wu M."/>
            <person name="Huston A.L."/>
            <person name="Lewis M."/>
            <person name="Weaver B."/>
            <person name="Weidman J.F."/>
            <person name="Khouri H."/>
            <person name="Utterback T.R."/>
            <person name="Feldblyum T.V."/>
            <person name="Fraser C.M."/>
        </authorList>
    </citation>
    <scope>NUCLEOTIDE SEQUENCE [LARGE SCALE GENOMIC DNA]</scope>
    <source>
        <strain>34H / ATCC BAA-681</strain>
    </source>
</reference>
<keyword id="KW-0997">Cell inner membrane</keyword>
<keyword id="KW-1003">Cell membrane</keyword>
<keyword id="KW-0472">Membrane</keyword>
<protein>
    <recommendedName>
        <fullName evidence="1">Protein Syd</fullName>
    </recommendedName>
</protein>
<dbReference type="EMBL" id="CP000083">
    <property type="protein sequence ID" value="AAZ24786.1"/>
    <property type="molecule type" value="Genomic_DNA"/>
</dbReference>
<dbReference type="RefSeq" id="WP_011044292.1">
    <property type="nucleotide sequence ID" value="NC_003910.7"/>
</dbReference>
<dbReference type="SMR" id="Q47YB4"/>
<dbReference type="STRING" id="167879.CPS_3532"/>
<dbReference type="KEGG" id="cps:CPS_3532"/>
<dbReference type="HOGENOM" id="CLU_121866_0_0_6"/>
<dbReference type="Proteomes" id="UP000000547">
    <property type="component" value="Chromosome"/>
</dbReference>
<dbReference type="GO" id="GO:0009898">
    <property type="term" value="C:cytoplasmic side of plasma membrane"/>
    <property type="evidence" value="ECO:0007669"/>
    <property type="project" value="InterPro"/>
</dbReference>
<dbReference type="CDD" id="cd16323">
    <property type="entry name" value="Syd"/>
    <property type="match status" value="1"/>
</dbReference>
<dbReference type="Gene3D" id="3.40.1580.20">
    <property type="entry name" value="Syd protein"/>
    <property type="match status" value="1"/>
</dbReference>
<dbReference type="HAMAP" id="MF_01104">
    <property type="entry name" value="Syd"/>
    <property type="match status" value="1"/>
</dbReference>
<dbReference type="InterPro" id="IPR009948">
    <property type="entry name" value="Syd"/>
</dbReference>
<dbReference type="InterPro" id="IPR038228">
    <property type="entry name" value="Syd_sf"/>
</dbReference>
<dbReference type="NCBIfam" id="NF003439">
    <property type="entry name" value="PRK04968.1"/>
    <property type="match status" value="1"/>
</dbReference>
<dbReference type="Pfam" id="PF07348">
    <property type="entry name" value="Syd"/>
    <property type="match status" value="1"/>
</dbReference>
<feature type="chain" id="PRO_0000298247" description="Protein Syd">
    <location>
        <begin position="1"/>
        <end position="200"/>
    </location>
</feature>
<proteinExistence type="inferred from homology"/>
<accession>Q47YB4</accession>
<organism>
    <name type="scientific">Colwellia psychrerythraea (strain 34H / ATCC BAA-681)</name>
    <name type="common">Vibrio psychroerythus</name>
    <dbReference type="NCBI Taxonomy" id="167879"/>
    <lineage>
        <taxon>Bacteria</taxon>
        <taxon>Pseudomonadati</taxon>
        <taxon>Pseudomonadota</taxon>
        <taxon>Gammaproteobacteria</taxon>
        <taxon>Alteromonadales</taxon>
        <taxon>Colwelliaceae</taxon>
        <taxon>Colwellia</taxon>
    </lineage>
</organism>
<comment type="function">
    <text evidence="1">Interacts with the SecY protein in vivo. May bind preferentially to an uncomplexed state of SecY, thus functioning either as a chelating agent for excess SecY in the cell or as a regulatory factor that negatively controls the translocase function.</text>
</comment>
<comment type="subcellular location">
    <subcellularLocation>
        <location evidence="1">Cell inner membrane</location>
        <topology evidence="1">Peripheral membrane protein</topology>
        <orientation evidence="1">Cytoplasmic side</orientation>
    </subcellularLocation>
    <text evidence="1">Loosely associated with the cytoplasmic side of the inner membrane, probably via SecY.</text>
</comment>
<comment type="similarity">
    <text evidence="1">Belongs to the Syd family.</text>
</comment>
<evidence type="ECO:0000255" key="1">
    <source>
        <dbReference type="HAMAP-Rule" id="MF_01104"/>
    </source>
</evidence>
<gene>
    <name evidence="1" type="primary">syd</name>
    <name type="ordered locus">CPS_3532</name>
</gene>
<sequence>MTSTNKTLTQAILNFSKSYSQQHVEQFGHLPTVEHDEQWPSPCDLGSHDTSHHYWQAVAMESVQLADNKEEALSFENVESALNIELHPDIKIYFTTIFSGDIEAQSDDGELSLLFAWNKDDFERLQENIIGHILMKQKLKQVETVFFAVTDEEDMIISVDNSSGEVWVEQVGCKPHKKLSDSLAEFISQLTHKNVVSEKS</sequence>
<name>SYDP_COLP3</name>